<evidence type="ECO:0000255" key="1">
    <source>
        <dbReference type="HAMAP-Rule" id="MF_03140"/>
    </source>
</evidence>
<evidence type="ECO:0000256" key="2">
    <source>
        <dbReference type="SAM" id="MobiDB-lite"/>
    </source>
</evidence>
<sequence>MGILGLSKLIADLAPQAIRESEMKHFFGRKVAIDASMCLYQFLIAVRSEGAQLATVNGDPTSHLMGMFYRTIRLLDNGIKPVYVFDGKPPDLKSGELAKRAERREEAEKALKAATDAGDDAGIEKFNRRLVRVTKEHAKEAKELLTLMGVPYVDAPCEAEAQCAALVKAGKVYATATEDMDALTFGSTKLLRYLTYSEARKMPVKEFSYDKLLEGLAINNREFIDLCILLGCDYCESIKGIGPKRAIELINTYRDIETILDNLDSSKYTVPENWNYKVARELFIEPEVADADSIDLKWVEPDEEGLVKFLCGDRQFNEERVRNGAKKLMKSKQAQTQVRLDSFFKTLPSTPNATNAAKRKAEEAKKSANNKKAKTSGGGRGRRPK</sequence>
<feature type="chain" id="PRO_0000403500" description="Flap endonuclease 1">
    <location>
        <begin position="1"/>
        <end position="385"/>
    </location>
</feature>
<feature type="region of interest" description="N-domain">
    <location>
        <begin position="1"/>
        <end position="104"/>
    </location>
</feature>
<feature type="region of interest" description="I-domain">
    <location>
        <begin position="122"/>
        <end position="253"/>
    </location>
</feature>
<feature type="region of interest" description="Interaction with PCNA" evidence="1">
    <location>
        <begin position="336"/>
        <end position="344"/>
    </location>
</feature>
<feature type="region of interest" description="Disordered" evidence="2">
    <location>
        <begin position="346"/>
        <end position="385"/>
    </location>
</feature>
<feature type="compositionally biased region" description="Basic residues" evidence="2">
    <location>
        <begin position="368"/>
        <end position="385"/>
    </location>
</feature>
<feature type="binding site" evidence="1">
    <location>
        <position position="34"/>
    </location>
    <ligand>
        <name>Mg(2+)</name>
        <dbReference type="ChEBI" id="CHEBI:18420"/>
        <label>1</label>
    </ligand>
</feature>
<feature type="binding site" evidence="1">
    <location>
        <position position="47"/>
    </location>
    <ligand>
        <name>DNA</name>
        <dbReference type="ChEBI" id="CHEBI:16991"/>
    </ligand>
</feature>
<feature type="binding site" evidence="1">
    <location>
        <position position="70"/>
    </location>
    <ligand>
        <name>DNA</name>
        <dbReference type="ChEBI" id="CHEBI:16991"/>
    </ligand>
</feature>
<feature type="binding site" evidence="1">
    <location>
        <position position="86"/>
    </location>
    <ligand>
        <name>Mg(2+)</name>
        <dbReference type="ChEBI" id="CHEBI:18420"/>
        <label>1</label>
    </ligand>
</feature>
<feature type="binding site" evidence="1">
    <location>
        <position position="158"/>
    </location>
    <ligand>
        <name>DNA</name>
        <dbReference type="ChEBI" id="CHEBI:16991"/>
    </ligand>
</feature>
<feature type="binding site" evidence="1">
    <location>
        <position position="158"/>
    </location>
    <ligand>
        <name>Mg(2+)</name>
        <dbReference type="ChEBI" id="CHEBI:18420"/>
        <label>1</label>
    </ligand>
</feature>
<feature type="binding site" evidence="1">
    <location>
        <position position="160"/>
    </location>
    <ligand>
        <name>Mg(2+)</name>
        <dbReference type="ChEBI" id="CHEBI:18420"/>
        <label>1</label>
    </ligand>
</feature>
<feature type="binding site" evidence="1">
    <location>
        <position position="179"/>
    </location>
    <ligand>
        <name>Mg(2+)</name>
        <dbReference type="ChEBI" id="CHEBI:18420"/>
        <label>2</label>
    </ligand>
</feature>
<feature type="binding site" evidence="1">
    <location>
        <position position="181"/>
    </location>
    <ligand>
        <name>Mg(2+)</name>
        <dbReference type="ChEBI" id="CHEBI:18420"/>
        <label>2</label>
    </ligand>
</feature>
<feature type="binding site" evidence="1">
    <location>
        <position position="231"/>
    </location>
    <ligand>
        <name>DNA</name>
        <dbReference type="ChEBI" id="CHEBI:16991"/>
    </ligand>
</feature>
<feature type="binding site" evidence="1">
    <location>
        <position position="233"/>
    </location>
    <ligand>
        <name>DNA</name>
        <dbReference type="ChEBI" id="CHEBI:16991"/>
    </ligand>
</feature>
<feature type="binding site" evidence="1">
    <location>
        <position position="233"/>
    </location>
    <ligand>
        <name>Mg(2+)</name>
        <dbReference type="ChEBI" id="CHEBI:18420"/>
        <label>2</label>
    </ligand>
</feature>
<proteinExistence type="evidence at transcript level"/>
<comment type="function">
    <text evidence="1">Structure-specific nuclease with 5'-flap endonuclease and 5'-3' exonuclease activities involved in DNA replication and repair. During DNA replication, cleaves the 5'-overhanging flap structure that is generated by displacement synthesis when DNA polymerase encounters the 5'-end of a downstream Okazaki fragment. It enters the flap from the 5'-end and then tracks to cleave the flap base, leaving a nick for ligation. Also involved in the long patch base excision repair (LP-BER) pathway, by cleaving within the apurinic/apyrimidinic (AP) site-terminated flap. Acts as a genome stabilization factor that prevents flaps from equilibrating into structures that lead to duplications and deletions. Also possesses 5'-3' exonuclease activity on nicked or gapped double-stranded DNA, and exhibits RNase H activity. Also involved in replication and repair of rDNA and in repairing mitochondrial DNA.</text>
</comment>
<comment type="cofactor">
    <cofactor evidence="1">
        <name>Mg(2+)</name>
        <dbReference type="ChEBI" id="CHEBI:18420"/>
    </cofactor>
    <text evidence="1">Binds 2 magnesium ions per subunit. They probably participate in the reaction catalyzed by the enzyme. May bind an additional third magnesium ion after substrate binding.</text>
</comment>
<comment type="subunit">
    <text evidence="1">Interacts with PCNA. Three molecules of FEN1 bind to one PCNA trimer with each molecule binding to one PCNA monomer. PCNA stimulates the nuclease activity without altering cleavage specificity.</text>
</comment>
<comment type="subcellular location">
    <subcellularLocation>
        <location evidence="1">Nucleus</location>
        <location evidence="1">Nucleolus</location>
    </subcellularLocation>
    <subcellularLocation>
        <location evidence="1">Nucleus</location>
        <location evidence="1">Nucleoplasm</location>
    </subcellularLocation>
    <subcellularLocation>
        <location evidence="1">Mitochondrion</location>
    </subcellularLocation>
    <text evidence="1">Resides mostly in the nucleoli and relocalizes to the nucleoplasm upon DNA damage.</text>
</comment>
<comment type="PTM">
    <text evidence="1">Phosphorylated. Phosphorylation upon DNA damage induces relocalization to the nuclear plasma.</text>
</comment>
<comment type="similarity">
    <text evidence="1">Belongs to the XPG/RAD2 endonuclease family. FEN1 subfamily.</text>
</comment>
<organism>
    <name type="scientific">Drosophila melanogaster</name>
    <name type="common">Fruit fly</name>
    <dbReference type="NCBI Taxonomy" id="7227"/>
    <lineage>
        <taxon>Eukaryota</taxon>
        <taxon>Metazoa</taxon>
        <taxon>Ecdysozoa</taxon>
        <taxon>Arthropoda</taxon>
        <taxon>Hexapoda</taxon>
        <taxon>Insecta</taxon>
        <taxon>Pterygota</taxon>
        <taxon>Neoptera</taxon>
        <taxon>Endopterygota</taxon>
        <taxon>Diptera</taxon>
        <taxon>Brachycera</taxon>
        <taxon>Muscomorpha</taxon>
        <taxon>Ephydroidea</taxon>
        <taxon>Drosophilidae</taxon>
        <taxon>Drosophila</taxon>
        <taxon>Sophophora</taxon>
    </lineage>
</organism>
<name>FEN1_DROME</name>
<reference key="1">
    <citation type="journal article" date="2000" name="Science">
        <title>The genome sequence of Drosophila melanogaster.</title>
        <authorList>
            <person name="Adams M.D."/>
            <person name="Celniker S.E."/>
            <person name="Holt R.A."/>
            <person name="Evans C.A."/>
            <person name="Gocayne J.D."/>
            <person name="Amanatides P.G."/>
            <person name="Scherer S.E."/>
            <person name="Li P.W."/>
            <person name="Hoskins R.A."/>
            <person name="Galle R.F."/>
            <person name="George R.A."/>
            <person name="Lewis S.E."/>
            <person name="Richards S."/>
            <person name="Ashburner M."/>
            <person name="Henderson S.N."/>
            <person name="Sutton G.G."/>
            <person name="Wortman J.R."/>
            <person name="Yandell M.D."/>
            <person name="Zhang Q."/>
            <person name="Chen L.X."/>
            <person name="Brandon R.C."/>
            <person name="Rogers Y.-H.C."/>
            <person name="Blazej R.G."/>
            <person name="Champe M."/>
            <person name="Pfeiffer B.D."/>
            <person name="Wan K.H."/>
            <person name="Doyle C."/>
            <person name="Baxter E.G."/>
            <person name="Helt G."/>
            <person name="Nelson C.R."/>
            <person name="Miklos G.L.G."/>
            <person name="Abril J.F."/>
            <person name="Agbayani A."/>
            <person name="An H.-J."/>
            <person name="Andrews-Pfannkoch C."/>
            <person name="Baldwin D."/>
            <person name="Ballew R.M."/>
            <person name="Basu A."/>
            <person name="Baxendale J."/>
            <person name="Bayraktaroglu L."/>
            <person name="Beasley E.M."/>
            <person name="Beeson K.Y."/>
            <person name="Benos P.V."/>
            <person name="Berman B.P."/>
            <person name="Bhandari D."/>
            <person name="Bolshakov S."/>
            <person name="Borkova D."/>
            <person name="Botchan M.R."/>
            <person name="Bouck J."/>
            <person name="Brokstein P."/>
            <person name="Brottier P."/>
            <person name="Burtis K.C."/>
            <person name="Busam D.A."/>
            <person name="Butler H."/>
            <person name="Cadieu E."/>
            <person name="Center A."/>
            <person name="Chandra I."/>
            <person name="Cherry J.M."/>
            <person name="Cawley S."/>
            <person name="Dahlke C."/>
            <person name="Davenport L.B."/>
            <person name="Davies P."/>
            <person name="de Pablos B."/>
            <person name="Delcher A."/>
            <person name="Deng Z."/>
            <person name="Mays A.D."/>
            <person name="Dew I."/>
            <person name="Dietz S.M."/>
            <person name="Dodson K."/>
            <person name="Doup L.E."/>
            <person name="Downes M."/>
            <person name="Dugan-Rocha S."/>
            <person name="Dunkov B.C."/>
            <person name="Dunn P."/>
            <person name="Durbin K.J."/>
            <person name="Evangelista C.C."/>
            <person name="Ferraz C."/>
            <person name="Ferriera S."/>
            <person name="Fleischmann W."/>
            <person name="Fosler C."/>
            <person name="Gabrielian A.E."/>
            <person name="Garg N.S."/>
            <person name="Gelbart W.M."/>
            <person name="Glasser K."/>
            <person name="Glodek A."/>
            <person name="Gong F."/>
            <person name="Gorrell J.H."/>
            <person name="Gu Z."/>
            <person name="Guan P."/>
            <person name="Harris M."/>
            <person name="Harris N.L."/>
            <person name="Harvey D.A."/>
            <person name="Heiman T.J."/>
            <person name="Hernandez J.R."/>
            <person name="Houck J."/>
            <person name="Hostin D."/>
            <person name="Houston K.A."/>
            <person name="Howland T.J."/>
            <person name="Wei M.-H."/>
            <person name="Ibegwam C."/>
            <person name="Jalali M."/>
            <person name="Kalush F."/>
            <person name="Karpen G.H."/>
            <person name="Ke Z."/>
            <person name="Kennison J.A."/>
            <person name="Ketchum K.A."/>
            <person name="Kimmel B.E."/>
            <person name="Kodira C.D."/>
            <person name="Kraft C.L."/>
            <person name="Kravitz S."/>
            <person name="Kulp D."/>
            <person name="Lai Z."/>
            <person name="Lasko P."/>
            <person name="Lei Y."/>
            <person name="Levitsky A.A."/>
            <person name="Li J.H."/>
            <person name="Li Z."/>
            <person name="Liang Y."/>
            <person name="Lin X."/>
            <person name="Liu X."/>
            <person name="Mattei B."/>
            <person name="McIntosh T.C."/>
            <person name="McLeod M.P."/>
            <person name="McPherson D."/>
            <person name="Merkulov G."/>
            <person name="Milshina N.V."/>
            <person name="Mobarry C."/>
            <person name="Morris J."/>
            <person name="Moshrefi A."/>
            <person name="Mount S.M."/>
            <person name="Moy M."/>
            <person name="Murphy B."/>
            <person name="Murphy L."/>
            <person name="Muzny D.M."/>
            <person name="Nelson D.L."/>
            <person name="Nelson D.R."/>
            <person name="Nelson K.A."/>
            <person name="Nixon K."/>
            <person name="Nusskern D.R."/>
            <person name="Pacleb J.M."/>
            <person name="Palazzolo M."/>
            <person name="Pittman G.S."/>
            <person name="Pan S."/>
            <person name="Pollard J."/>
            <person name="Puri V."/>
            <person name="Reese M.G."/>
            <person name="Reinert K."/>
            <person name="Remington K."/>
            <person name="Saunders R.D.C."/>
            <person name="Scheeler F."/>
            <person name="Shen H."/>
            <person name="Shue B.C."/>
            <person name="Siden-Kiamos I."/>
            <person name="Simpson M."/>
            <person name="Skupski M.P."/>
            <person name="Smith T.J."/>
            <person name="Spier E."/>
            <person name="Spradling A.C."/>
            <person name="Stapleton M."/>
            <person name="Strong R."/>
            <person name="Sun E."/>
            <person name="Svirskas R."/>
            <person name="Tector C."/>
            <person name="Turner R."/>
            <person name="Venter E."/>
            <person name="Wang A.H."/>
            <person name="Wang X."/>
            <person name="Wang Z.-Y."/>
            <person name="Wassarman D.A."/>
            <person name="Weinstock G.M."/>
            <person name="Weissenbach J."/>
            <person name="Williams S.M."/>
            <person name="Woodage T."/>
            <person name="Worley K.C."/>
            <person name="Wu D."/>
            <person name="Yang S."/>
            <person name="Yao Q.A."/>
            <person name="Ye J."/>
            <person name="Yeh R.-F."/>
            <person name="Zaveri J.S."/>
            <person name="Zhan M."/>
            <person name="Zhang G."/>
            <person name="Zhao Q."/>
            <person name="Zheng L."/>
            <person name="Zheng X.H."/>
            <person name="Zhong F.N."/>
            <person name="Zhong W."/>
            <person name="Zhou X."/>
            <person name="Zhu S.C."/>
            <person name="Zhu X."/>
            <person name="Smith H.O."/>
            <person name="Gibbs R.A."/>
            <person name="Myers E.W."/>
            <person name="Rubin G.M."/>
            <person name="Venter J.C."/>
        </authorList>
    </citation>
    <scope>NUCLEOTIDE SEQUENCE [LARGE SCALE GENOMIC DNA]</scope>
    <source>
        <strain>Berkeley</strain>
    </source>
</reference>
<reference key="2">
    <citation type="journal article" date="2002" name="Genome Biol.">
        <title>Annotation of the Drosophila melanogaster euchromatic genome: a systematic review.</title>
        <authorList>
            <person name="Misra S."/>
            <person name="Crosby M.A."/>
            <person name="Mungall C.J."/>
            <person name="Matthews B.B."/>
            <person name="Campbell K.S."/>
            <person name="Hradecky P."/>
            <person name="Huang Y."/>
            <person name="Kaminker J.S."/>
            <person name="Millburn G.H."/>
            <person name="Prochnik S.E."/>
            <person name="Smith C.D."/>
            <person name="Tupy J.L."/>
            <person name="Whitfield E.J."/>
            <person name="Bayraktaroglu L."/>
            <person name="Berman B.P."/>
            <person name="Bettencourt B.R."/>
            <person name="Celniker S.E."/>
            <person name="de Grey A.D.N.J."/>
            <person name="Drysdale R.A."/>
            <person name="Harris N.L."/>
            <person name="Richter J."/>
            <person name="Russo S."/>
            <person name="Schroeder A.J."/>
            <person name="Shu S.Q."/>
            <person name="Stapleton M."/>
            <person name="Yamada C."/>
            <person name="Ashburner M."/>
            <person name="Gelbart W.M."/>
            <person name="Rubin G.M."/>
            <person name="Lewis S.E."/>
        </authorList>
    </citation>
    <scope>GENOME REANNOTATION</scope>
    <source>
        <strain>Berkeley</strain>
    </source>
</reference>
<reference key="3">
    <citation type="journal article" date="2000" name="Science">
        <title>From sequence to chromosome: the tip of the X chromosome of D. melanogaster.</title>
        <authorList>
            <person name="Benos P.V."/>
            <person name="Gatt M.K."/>
            <person name="Ashburner M."/>
            <person name="Murphy L."/>
            <person name="Harris D."/>
            <person name="Barrell B.G."/>
            <person name="Ferraz C."/>
            <person name="Vidal S."/>
            <person name="Brun C."/>
            <person name="Demailles J."/>
            <person name="Cadieu E."/>
            <person name="Dreano S."/>
            <person name="Gloux S."/>
            <person name="Lelaure V."/>
            <person name="Mottier S."/>
            <person name="Galibert F."/>
            <person name="Borkova D."/>
            <person name="Minana B."/>
            <person name="Kafatos F.C."/>
            <person name="Louis C."/>
            <person name="Siden-Kiamos I."/>
            <person name="Bolshakov S."/>
            <person name="Papagiannakis G."/>
            <person name="Spanos L."/>
            <person name="Cox S."/>
            <person name="Madueno E."/>
            <person name="de Pablos B."/>
            <person name="Modolell J."/>
            <person name="Peter A."/>
            <person name="Schoettler P."/>
            <person name="Werner M."/>
            <person name="Mourkioti F."/>
            <person name="Beinert N."/>
            <person name="Dowe G."/>
            <person name="Schaefer U."/>
            <person name="Jaeckle H."/>
            <person name="Bucheton A."/>
            <person name="Callister D.M."/>
            <person name="Campbell L.A."/>
            <person name="Darlamitsou A."/>
            <person name="Henderson N.S."/>
            <person name="McMillan P.J."/>
            <person name="Salles C."/>
            <person name="Tait E.A."/>
            <person name="Valenti P."/>
            <person name="Saunders R.D.C."/>
            <person name="Glover D.M."/>
        </authorList>
    </citation>
    <scope>NUCLEOTIDE SEQUENCE [LARGE SCALE GENOMIC DNA]</scope>
    <source>
        <strain>Oregon-R</strain>
    </source>
</reference>
<reference key="4">
    <citation type="submission" date="2009-10" db="EMBL/GenBank/DDBJ databases">
        <authorList>
            <person name="Carlson J."/>
            <person name="Booth B."/>
            <person name="Frise E."/>
            <person name="Sandler J."/>
            <person name="Wan K."/>
            <person name="Yu C."/>
            <person name="Celniker S.E."/>
        </authorList>
    </citation>
    <scope>NUCLEOTIDE SEQUENCE [LARGE SCALE MRNA]</scope>
    <source>
        <strain>Berkeley</strain>
    </source>
</reference>
<protein>
    <recommendedName>
        <fullName evidence="1">Flap endonuclease 1</fullName>
        <shortName evidence="1">FEN-1</shortName>
        <ecNumber evidence="1">3.1.-.-</ecNumber>
    </recommendedName>
    <alternativeName>
        <fullName evidence="1">Flap structure-specific endonuclease 1</fullName>
    </alternativeName>
</protein>
<accession>Q7K7A9</accession>
<dbReference type="EC" id="3.1.-.-" evidence="1"/>
<dbReference type="EMBL" id="AE013599">
    <property type="protein sequence ID" value="AAF57944.1"/>
    <property type="molecule type" value="Genomic_DNA"/>
</dbReference>
<dbReference type="EMBL" id="AL031863">
    <property type="protein sequence ID" value="CAA21320.1"/>
    <property type="molecule type" value="Genomic_DNA"/>
</dbReference>
<dbReference type="EMBL" id="BT100031">
    <property type="protein sequence ID" value="ACX54939.1"/>
    <property type="molecule type" value="mRNA"/>
</dbReference>
<dbReference type="PIR" id="T13692">
    <property type="entry name" value="T13692"/>
</dbReference>
<dbReference type="RefSeq" id="NP_523765.1">
    <property type="nucleotide sequence ID" value="NM_079041.2"/>
</dbReference>
<dbReference type="SMR" id="Q7K7A9"/>
<dbReference type="BioGRID" id="62595">
    <property type="interactions" value="5"/>
</dbReference>
<dbReference type="FunCoup" id="Q7K7A9">
    <property type="interactions" value="2206"/>
</dbReference>
<dbReference type="IntAct" id="Q7K7A9">
    <property type="interactions" value="3"/>
</dbReference>
<dbReference type="STRING" id="7227.FBpp0086223"/>
<dbReference type="PaxDb" id="7227-FBpp0086223"/>
<dbReference type="DNASU" id="36887"/>
<dbReference type="EnsemblMetazoa" id="FBtr0087075">
    <property type="protein sequence ID" value="FBpp0086223"/>
    <property type="gene ID" value="FBgn0025832"/>
</dbReference>
<dbReference type="GeneID" id="36887"/>
<dbReference type="KEGG" id="dme:Dmel_CG8648"/>
<dbReference type="UCSC" id="CG8648-RA">
    <property type="organism name" value="d. melanogaster"/>
</dbReference>
<dbReference type="AGR" id="FB:FBgn0025832"/>
<dbReference type="CTD" id="2237"/>
<dbReference type="FlyBase" id="FBgn0025832">
    <property type="gene designation" value="Fen1"/>
</dbReference>
<dbReference type="VEuPathDB" id="VectorBase:FBgn0025832"/>
<dbReference type="eggNOG" id="KOG2519">
    <property type="taxonomic scope" value="Eukaryota"/>
</dbReference>
<dbReference type="GeneTree" id="ENSGT00940000155807"/>
<dbReference type="HOGENOM" id="CLU_032444_2_0_1"/>
<dbReference type="InParanoid" id="Q7K7A9"/>
<dbReference type="OMA" id="MGIPWVQ"/>
<dbReference type="OrthoDB" id="1937206at2759"/>
<dbReference type="PhylomeDB" id="Q7K7A9"/>
<dbReference type="Reactome" id="R-DME-5651801">
    <property type="pathway name" value="PCNA-Dependent Long Patch Base Excision Repair"/>
</dbReference>
<dbReference type="Reactome" id="R-DME-5685939">
    <property type="pathway name" value="HDR through MMEJ (alt-NHEJ)"/>
</dbReference>
<dbReference type="Reactome" id="R-DME-69166">
    <property type="pathway name" value="Removal of the Flap Intermediate"/>
</dbReference>
<dbReference type="SignaLink" id="Q7K7A9"/>
<dbReference type="BioGRID-ORCS" id="36887">
    <property type="hits" value="1 hit in 1 CRISPR screen"/>
</dbReference>
<dbReference type="GenomeRNAi" id="36887"/>
<dbReference type="PRO" id="PR:Q7K7A9"/>
<dbReference type="Proteomes" id="UP000000803">
    <property type="component" value="Chromosome 2R"/>
</dbReference>
<dbReference type="Bgee" id="FBgn0025832">
    <property type="expression patterns" value="Expressed in secondary oocyte and 41 other cell types or tissues"/>
</dbReference>
<dbReference type="GO" id="GO:0005739">
    <property type="term" value="C:mitochondrion"/>
    <property type="evidence" value="ECO:0007669"/>
    <property type="project" value="UniProtKB-SubCell"/>
</dbReference>
<dbReference type="GO" id="GO:0005730">
    <property type="term" value="C:nucleolus"/>
    <property type="evidence" value="ECO:0007669"/>
    <property type="project" value="UniProtKB-SubCell"/>
</dbReference>
<dbReference type="GO" id="GO:0005654">
    <property type="term" value="C:nucleoplasm"/>
    <property type="evidence" value="ECO:0007669"/>
    <property type="project" value="UniProtKB-SubCell"/>
</dbReference>
<dbReference type="GO" id="GO:0005634">
    <property type="term" value="C:nucleus"/>
    <property type="evidence" value="ECO:0000318"/>
    <property type="project" value="GO_Central"/>
</dbReference>
<dbReference type="GO" id="GO:0008409">
    <property type="term" value="F:5'-3' exonuclease activity"/>
    <property type="evidence" value="ECO:0000318"/>
    <property type="project" value="GO_Central"/>
</dbReference>
<dbReference type="GO" id="GO:0017108">
    <property type="term" value="F:5'-flap endonuclease activity"/>
    <property type="evidence" value="ECO:0000318"/>
    <property type="project" value="GO_Central"/>
</dbReference>
<dbReference type="GO" id="GO:0003677">
    <property type="term" value="F:DNA binding"/>
    <property type="evidence" value="ECO:0007669"/>
    <property type="project" value="UniProtKB-UniRule"/>
</dbReference>
<dbReference type="GO" id="GO:0004519">
    <property type="term" value="F:endonuclease activity"/>
    <property type="evidence" value="ECO:0000250"/>
    <property type="project" value="FlyBase"/>
</dbReference>
<dbReference type="GO" id="GO:0000287">
    <property type="term" value="F:magnesium ion binding"/>
    <property type="evidence" value="ECO:0000318"/>
    <property type="project" value="GO_Central"/>
</dbReference>
<dbReference type="GO" id="GO:0030145">
    <property type="term" value="F:manganese ion binding"/>
    <property type="evidence" value="ECO:0000318"/>
    <property type="project" value="GO_Central"/>
</dbReference>
<dbReference type="GO" id="GO:0004523">
    <property type="term" value="F:RNA-DNA hybrid ribonuclease activity"/>
    <property type="evidence" value="ECO:0000318"/>
    <property type="project" value="GO_Central"/>
</dbReference>
<dbReference type="GO" id="GO:0006284">
    <property type="term" value="P:base-excision repair"/>
    <property type="evidence" value="ECO:0007669"/>
    <property type="project" value="UniProtKB-UniRule"/>
</dbReference>
<dbReference type="GO" id="GO:0043137">
    <property type="term" value="P:DNA replication, removal of RNA primer"/>
    <property type="evidence" value="ECO:0007669"/>
    <property type="project" value="UniProtKB-UniRule"/>
</dbReference>
<dbReference type="CDD" id="cd09867">
    <property type="entry name" value="PIN_FEN1"/>
    <property type="match status" value="1"/>
</dbReference>
<dbReference type="FunFam" id="1.10.150.20:FF:000009">
    <property type="entry name" value="Flap endonuclease 1"/>
    <property type="match status" value="1"/>
</dbReference>
<dbReference type="FunFam" id="3.40.50.1010:FF:000003">
    <property type="entry name" value="Flap endonuclease 1"/>
    <property type="match status" value="1"/>
</dbReference>
<dbReference type="Gene3D" id="1.10.150.20">
    <property type="entry name" value="5' to 3' exonuclease, C-terminal subdomain"/>
    <property type="match status" value="1"/>
</dbReference>
<dbReference type="Gene3D" id="3.40.50.1010">
    <property type="entry name" value="5'-nuclease"/>
    <property type="match status" value="1"/>
</dbReference>
<dbReference type="HAMAP" id="MF_00614">
    <property type="entry name" value="Fen"/>
    <property type="match status" value="1"/>
</dbReference>
<dbReference type="InterPro" id="IPR036279">
    <property type="entry name" value="5-3_exonuclease_C_sf"/>
</dbReference>
<dbReference type="InterPro" id="IPR023426">
    <property type="entry name" value="Flap_endonuc"/>
</dbReference>
<dbReference type="InterPro" id="IPR008918">
    <property type="entry name" value="HhH2"/>
</dbReference>
<dbReference type="InterPro" id="IPR029060">
    <property type="entry name" value="PIN-like_dom_sf"/>
</dbReference>
<dbReference type="InterPro" id="IPR006086">
    <property type="entry name" value="XPG-I_dom"/>
</dbReference>
<dbReference type="InterPro" id="IPR006084">
    <property type="entry name" value="XPG/Rad2"/>
</dbReference>
<dbReference type="InterPro" id="IPR019974">
    <property type="entry name" value="XPG_CS"/>
</dbReference>
<dbReference type="InterPro" id="IPR006085">
    <property type="entry name" value="XPG_DNA_repair_N"/>
</dbReference>
<dbReference type="PANTHER" id="PTHR11081:SF9">
    <property type="entry name" value="FLAP ENDONUCLEASE 1"/>
    <property type="match status" value="1"/>
</dbReference>
<dbReference type="PANTHER" id="PTHR11081">
    <property type="entry name" value="FLAP ENDONUCLEASE FAMILY MEMBER"/>
    <property type="match status" value="1"/>
</dbReference>
<dbReference type="Pfam" id="PF00867">
    <property type="entry name" value="XPG_I"/>
    <property type="match status" value="1"/>
</dbReference>
<dbReference type="Pfam" id="PF00752">
    <property type="entry name" value="XPG_N"/>
    <property type="match status" value="1"/>
</dbReference>
<dbReference type="PRINTS" id="PR00853">
    <property type="entry name" value="XPGRADSUPER"/>
</dbReference>
<dbReference type="SMART" id="SM00279">
    <property type="entry name" value="HhH2"/>
    <property type="match status" value="1"/>
</dbReference>
<dbReference type="SMART" id="SM00484">
    <property type="entry name" value="XPGI"/>
    <property type="match status" value="1"/>
</dbReference>
<dbReference type="SMART" id="SM00485">
    <property type="entry name" value="XPGN"/>
    <property type="match status" value="1"/>
</dbReference>
<dbReference type="SUPFAM" id="SSF47807">
    <property type="entry name" value="5' to 3' exonuclease, C-terminal subdomain"/>
    <property type="match status" value="1"/>
</dbReference>
<dbReference type="SUPFAM" id="SSF88723">
    <property type="entry name" value="PIN domain-like"/>
    <property type="match status" value="1"/>
</dbReference>
<dbReference type="PROSITE" id="PS00841">
    <property type="entry name" value="XPG_1"/>
    <property type="match status" value="1"/>
</dbReference>
<dbReference type="PROSITE" id="PS00842">
    <property type="entry name" value="XPG_2"/>
    <property type="match status" value="1"/>
</dbReference>
<keyword id="KW-0227">DNA damage</keyword>
<keyword id="KW-0234">DNA repair</keyword>
<keyword id="KW-0235">DNA replication</keyword>
<keyword id="KW-0255">Endonuclease</keyword>
<keyword id="KW-0269">Exonuclease</keyword>
<keyword id="KW-0378">Hydrolase</keyword>
<keyword id="KW-0460">Magnesium</keyword>
<keyword id="KW-0479">Metal-binding</keyword>
<keyword id="KW-0496">Mitochondrion</keyword>
<keyword id="KW-0540">Nuclease</keyword>
<keyword id="KW-0539">Nucleus</keyword>
<keyword id="KW-0597">Phosphoprotein</keyword>
<keyword id="KW-1185">Reference proteome</keyword>
<gene>
    <name evidence="1" type="primary">Fen1</name>
    <name type="ORF">CG8648</name>
</gene>